<name>PDXD1_XENLA</name>
<dbReference type="EC" id="4.1.1.-"/>
<dbReference type="EMBL" id="BC076864">
    <property type="protein sequence ID" value="AAH76864.1"/>
    <property type="molecule type" value="mRNA"/>
</dbReference>
<dbReference type="RefSeq" id="NP_001086603.1">
    <property type="nucleotide sequence ID" value="NM_001093134.1"/>
</dbReference>
<dbReference type="SMR" id="Q6DF78"/>
<dbReference type="DNASU" id="446438"/>
<dbReference type="GeneID" id="446438"/>
<dbReference type="KEGG" id="xla:446438"/>
<dbReference type="AGR" id="Xenbase:XB-GENE-1005634"/>
<dbReference type="CTD" id="446438"/>
<dbReference type="Xenbase" id="XB-GENE-1005634">
    <property type="gene designation" value="pdxdc1.L"/>
</dbReference>
<dbReference type="OMA" id="RLQYACR"/>
<dbReference type="OrthoDB" id="2161780at2759"/>
<dbReference type="Proteomes" id="UP000186698">
    <property type="component" value="Chromosome 9_10L"/>
</dbReference>
<dbReference type="Bgee" id="446438">
    <property type="expression patterns" value="Expressed in stomach and 19 other cell types or tissues"/>
</dbReference>
<dbReference type="GO" id="GO:0043231">
    <property type="term" value="C:intracellular membrane-bounded organelle"/>
    <property type="evidence" value="ECO:0000318"/>
    <property type="project" value="GO_Central"/>
</dbReference>
<dbReference type="GO" id="GO:0016831">
    <property type="term" value="F:carboxy-lyase activity"/>
    <property type="evidence" value="ECO:0007669"/>
    <property type="project" value="UniProtKB-KW"/>
</dbReference>
<dbReference type="GO" id="GO:0030170">
    <property type="term" value="F:pyridoxal phosphate binding"/>
    <property type="evidence" value="ECO:0007669"/>
    <property type="project" value="InterPro"/>
</dbReference>
<dbReference type="GO" id="GO:0019752">
    <property type="term" value="P:carboxylic acid metabolic process"/>
    <property type="evidence" value="ECO:0007669"/>
    <property type="project" value="InterPro"/>
</dbReference>
<dbReference type="FunFam" id="3.40.640.10:FF:000036">
    <property type="entry name" value="pyridoxal-dependent decarboxylase domain-containing protein 1 isoform X2"/>
    <property type="match status" value="1"/>
</dbReference>
<dbReference type="Gene3D" id="3.40.640.10">
    <property type="entry name" value="Type I PLP-dependent aspartate aminotransferase-like (Major domain)"/>
    <property type="match status" value="1"/>
</dbReference>
<dbReference type="InterPro" id="IPR050477">
    <property type="entry name" value="GrpII_AminoAcid_Decarb"/>
</dbReference>
<dbReference type="InterPro" id="IPR055103">
    <property type="entry name" value="PDXDC1-like_2nd"/>
</dbReference>
<dbReference type="InterPro" id="IPR055102">
    <property type="entry name" value="PDXDC1-like_3rd"/>
</dbReference>
<dbReference type="InterPro" id="IPR002129">
    <property type="entry name" value="PyrdxlP-dep_de-COase"/>
</dbReference>
<dbReference type="InterPro" id="IPR015424">
    <property type="entry name" value="PyrdxlP-dep_Trfase"/>
</dbReference>
<dbReference type="InterPro" id="IPR015421">
    <property type="entry name" value="PyrdxlP-dep_Trfase_major"/>
</dbReference>
<dbReference type="PANTHER" id="PTHR42735">
    <property type="match status" value="1"/>
</dbReference>
<dbReference type="PANTHER" id="PTHR42735:SF1">
    <property type="entry name" value="PYRIDOXAL-DEPENDENT DECARBOXYLASE DOMAIN-CONTAINING PROTEIN 1-RELATED"/>
    <property type="match status" value="1"/>
</dbReference>
<dbReference type="Pfam" id="PF22930">
    <property type="entry name" value="PDXDC1-like_cen"/>
    <property type="match status" value="1"/>
</dbReference>
<dbReference type="Pfam" id="PF22937">
    <property type="entry name" value="PDXDC1-like_cen2"/>
    <property type="match status" value="1"/>
</dbReference>
<dbReference type="Pfam" id="PF00282">
    <property type="entry name" value="Pyridoxal_deC"/>
    <property type="match status" value="1"/>
</dbReference>
<dbReference type="SUPFAM" id="SSF53383">
    <property type="entry name" value="PLP-dependent transferases"/>
    <property type="match status" value="1"/>
</dbReference>
<sequence>MQKQIPQMVDPTLAEMGKNLDEAMKILEDNQRPSEEEKDGKKYTRKDIPGPLQGSGQNMVSVLQLVQNLMHDDEEEQSPSLRRIQNVGEQGHMALLGHSLAAYISVLDREHLRKLTTRILSDTTLWLCRLFRYDNGSAYYHEDDREGLLKVCRLVIHSRYEDYTTDGFNVLYNKLPVIYISAASRPGLGQSVCNQLGLPLSCLCRVPCNTMFGSQHEMDVALLDRLIKDDIQSGKCPLLLVANAGTPGAGHTDKLGRLKELCDQYNIWLHVEGVNLATLALGYVSSSVLAATKCDSMTLTLGPWLGLPAVPAVTLYRHEDPSLSLAAGLTSSQPVEKLRALPLWLSLQYLGHSGIVERIKHASQLSQKLLENLKNLSPVKTPVENDGSSPVVVFRFVYEGCKSDSTLNLSTIERDSDALNQWLGDQLAALVPSSGVDIVELEDEGTCVRFNPLMTCAVLGTTAEDVEQLVACLRMKIPVLENTLRLKEEFRQEVERIAGLSYINDYSWAGLGVLRYEQFSEEQDAAKREADLEKITVALLKKLNELETDLTFCSGPEFGAEKNCIYIGMASEDLDVSELVETITAMGREIEENSRLLENMTEVVRKGILEAEVQLNKANEERLLEEGVLRQIPLVGSMLNWLSPVQATPKGRTFNLTAGSLETTEMTYISKAQTTGLTPPPTPTSAHGKRQAGQKLFKRLSRNSDAMSETSSISHLEEVESLEALPMPEYDSSAAENSAMGEPFATAEQSSTPSIVPTETSSEGSQEPSIPSANTAESDSLR</sequence>
<accession>Q6DF78</accession>
<evidence type="ECO:0000250" key="1"/>
<evidence type="ECO:0000256" key="2">
    <source>
        <dbReference type="SAM" id="MobiDB-lite"/>
    </source>
</evidence>
<evidence type="ECO:0000305" key="3"/>
<protein>
    <recommendedName>
        <fullName>Pyridoxal-dependent decarboxylase domain-containing protein 1</fullName>
        <ecNumber>4.1.1.-</ecNumber>
    </recommendedName>
</protein>
<reference key="1">
    <citation type="submission" date="2004-07" db="EMBL/GenBank/DDBJ databases">
        <authorList>
            <consortium name="NIH - Xenopus Gene Collection (XGC) project"/>
        </authorList>
    </citation>
    <scope>NUCLEOTIDE SEQUENCE [LARGE SCALE MRNA]</scope>
    <source>
        <tissue>Oocyte</tissue>
    </source>
</reference>
<proteinExistence type="evidence at transcript level"/>
<gene>
    <name type="primary">pdxdc1</name>
</gene>
<feature type="chain" id="PRO_0000297679" description="Pyridoxal-dependent decarboxylase domain-containing protein 1">
    <location>
        <begin position="1"/>
        <end position="782"/>
    </location>
</feature>
<feature type="region of interest" description="Disordered" evidence="2">
    <location>
        <begin position="26"/>
        <end position="56"/>
    </location>
</feature>
<feature type="region of interest" description="Disordered" evidence="2">
    <location>
        <begin position="673"/>
        <end position="695"/>
    </location>
</feature>
<feature type="region of interest" description="Disordered" evidence="2">
    <location>
        <begin position="702"/>
        <end position="721"/>
    </location>
</feature>
<feature type="region of interest" description="Disordered" evidence="2">
    <location>
        <begin position="726"/>
        <end position="782"/>
    </location>
</feature>
<feature type="compositionally biased region" description="Basic and acidic residues" evidence="2">
    <location>
        <begin position="26"/>
        <end position="48"/>
    </location>
</feature>
<feature type="compositionally biased region" description="Polar residues" evidence="2">
    <location>
        <begin position="703"/>
        <end position="714"/>
    </location>
</feature>
<feature type="compositionally biased region" description="Polar residues" evidence="2">
    <location>
        <begin position="747"/>
        <end position="782"/>
    </location>
</feature>
<comment type="cofactor">
    <cofactor evidence="1">
        <name>pyridoxal 5'-phosphate</name>
        <dbReference type="ChEBI" id="CHEBI:597326"/>
    </cofactor>
</comment>
<comment type="similarity">
    <text evidence="3">Belongs to the group II decarboxylase family.</text>
</comment>
<keyword id="KW-0210">Decarboxylase</keyword>
<keyword id="KW-0456">Lyase</keyword>
<keyword id="KW-0663">Pyridoxal phosphate</keyword>
<keyword id="KW-1185">Reference proteome</keyword>
<organism>
    <name type="scientific">Xenopus laevis</name>
    <name type="common">African clawed frog</name>
    <dbReference type="NCBI Taxonomy" id="8355"/>
    <lineage>
        <taxon>Eukaryota</taxon>
        <taxon>Metazoa</taxon>
        <taxon>Chordata</taxon>
        <taxon>Craniata</taxon>
        <taxon>Vertebrata</taxon>
        <taxon>Euteleostomi</taxon>
        <taxon>Amphibia</taxon>
        <taxon>Batrachia</taxon>
        <taxon>Anura</taxon>
        <taxon>Pipoidea</taxon>
        <taxon>Pipidae</taxon>
        <taxon>Xenopodinae</taxon>
        <taxon>Xenopus</taxon>
        <taxon>Xenopus</taxon>
    </lineage>
</organism>